<gene>
    <name type="primary">PETE</name>
</gene>
<evidence type="ECO:0000250" key="1">
    <source>
        <dbReference type="UniProtKB" id="P18068"/>
    </source>
</evidence>
<evidence type="ECO:0000269" key="2">
    <source>
    </source>
</evidence>
<evidence type="ECO:0000305" key="3"/>
<accession>P00292</accession>
<comment type="function">
    <text>Participates in electron transfer between P700 and the cytochrome b6-f complex in photosystem I.</text>
</comment>
<comment type="cofactor">
    <cofactor evidence="1">
        <name>Cu(2+)</name>
        <dbReference type="ChEBI" id="CHEBI:29036"/>
    </cofactor>
</comment>
<comment type="subcellular location">
    <subcellularLocation>
        <location evidence="2">Plastid</location>
        <location evidence="2">Chloroplast thylakoid membrane</location>
        <topology>Peripheral membrane protein</topology>
        <orientation>Lumenal side</orientation>
    </subcellularLocation>
    <text>Loosely bound to the inner thylakoid membrane surface in chloroplasts.</text>
</comment>
<comment type="similarity">
    <text evidence="3">Belongs to the plastocyanin family.</text>
</comment>
<keyword id="KW-0150">Chloroplast</keyword>
<keyword id="KW-0186">Copper</keyword>
<keyword id="KW-0903">Direct protein sequencing</keyword>
<keyword id="KW-0249">Electron transport</keyword>
<keyword id="KW-0472">Membrane</keyword>
<keyword id="KW-0479">Metal-binding</keyword>
<keyword id="KW-0934">Plastid</keyword>
<keyword id="KW-0793">Thylakoid</keyword>
<keyword id="KW-0813">Transport</keyword>
<sequence length="99" mass="10494">IEVLLGGDDGSLAFIPNDFSVAAGEKIVFKNNAGFPHNVVFDEDEIPSGVDAGKISMNEEDLLNAPGEVYKVNLTEKGSYSFYCSPHQGAGMVGKVTVN</sequence>
<name>PLAS_CUCPE</name>
<reference key="1">
    <citation type="journal article" date="1974" name="Biochem. J.">
        <title>The amino acid sequence of plastocyanin from Cucurbita pepo L. (vegetable marrow).</title>
        <authorList>
            <person name="Scawen M.D."/>
            <person name="Boulter D."/>
        </authorList>
    </citation>
    <scope>PROTEIN SEQUENCE</scope>
    <scope>SUBCELLULAR LOCATION</scope>
</reference>
<protein>
    <recommendedName>
        <fullName>Plastocyanin</fullName>
    </recommendedName>
</protein>
<feature type="chain" id="PRO_0000085562" description="Plastocyanin">
    <location>
        <begin position="1"/>
        <end position="99"/>
    </location>
</feature>
<feature type="domain" description="Plastocyanin-like">
    <location>
        <begin position="1"/>
        <end position="99"/>
    </location>
</feature>
<feature type="binding site" evidence="1">
    <location>
        <position position="37"/>
    </location>
    <ligand>
        <name>Cu cation</name>
        <dbReference type="ChEBI" id="CHEBI:23378"/>
    </ligand>
</feature>
<feature type="binding site" evidence="1">
    <location>
        <position position="84"/>
    </location>
    <ligand>
        <name>Cu cation</name>
        <dbReference type="ChEBI" id="CHEBI:23378"/>
    </ligand>
</feature>
<feature type="binding site" evidence="1">
    <location>
        <position position="87"/>
    </location>
    <ligand>
        <name>Cu cation</name>
        <dbReference type="ChEBI" id="CHEBI:23378"/>
    </ligand>
</feature>
<feature type="binding site" evidence="1">
    <location>
        <position position="92"/>
    </location>
    <ligand>
        <name>Cu cation</name>
        <dbReference type="ChEBI" id="CHEBI:23378"/>
    </ligand>
</feature>
<proteinExistence type="evidence at protein level"/>
<dbReference type="PIR" id="A00302">
    <property type="entry name" value="CUVM"/>
</dbReference>
<dbReference type="SMR" id="P00292"/>
<dbReference type="GO" id="GO:0009543">
    <property type="term" value="C:chloroplast thylakoid lumen"/>
    <property type="evidence" value="ECO:0007669"/>
    <property type="project" value="TreeGrafter"/>
</dbReference>
<dbReference type="GO" id="GO:0009535">
    <property type="term" value="C:chloroplast thylakoid membrane"/>
    <property type="evidence" value="ECO:0007669"/>
    <property type="project" value="UniProtKB-SubCell"/>
</dbReference>
<dbReference type="GO" id="GO:0005507">
    <property type="term" value="F:copper ion binding"/>
    <property type="evidence" value="ECO:0007669"/>
    <property type="project" value="InterPro"/>
</dbReference>
<dbReference type="GO" id="GO:0046028">
    <property type="term" value="F:electron transporter, transferring electrons from cytochrome b6/f complex of photosystem II activity"/>
    <property type="evidence" value="ECO:0007669"/>
    <property type="project" value="TreeGrafter"/>
</dbReference>
<dbReference type="CDD" id="cd04219">
    <property type="entry name" value="Plastocyanin"/>
    <property type="match status" value="1"/>
</dbReference>
<dbReference type="Gene3D" id="2.60.40.420">
    <property type="entry name" value="Cupredoxins - blue copper proteins"/>
    <property type="match status" value="1"/>
</dbReference>
<dbReference type="InterPro" id="IPR000923">
    <property type="entry name" value="BlueCu_1"/>
</dbReference>
<dbReference type="InterPro" id="IPR028871">
    <property type="entry name" value="BlueCu_1_BS"/>
</dbReference>
<dbReference type="InterPro" id="IPR001235">
    <property type="entry name" value="Copper_blue_Plastocyanin"/>
</dbReference>
<dbReference type="InterPro" id="IPR008972">
    <property type="entry name" value="Cupredoxin"/>
</dbReference>
<dbReference type="InterPro" id="IPR002387">
    <property type="entry name" value="Plastocyanin"/>
</dbReference>
<dbReference type="NCBIfam" id="TIGR02656">
    <property type="entry name" value="cyanin_plasto"/>
    <property type="match status" value="1"/>
</dbReference>
<dbReference type="PANTHER" id="PTHR34192">
    <property type="entry name" value="PLASTOCYANIN MAJOR ISOFORM, CHLOROPLASTIC-RELATED"/>
    <property type="match status" value="1"/>
</dbReference>
<dbReference type="PANTHER" id="PTHR34192:SF10">
    <property type="entry name" value="PLASTOCYANIN MAJOR ISOFORM, CHLOROPLASTIC-RELATED"/>
    <property type="match status" value="1"/>
</dbReference>
<dbReference type="Pfam" id="PF00127">
    <property type="entry name" value="Copper-bind"/>
    <property type="match status" value="1"/>
</dbReference>
<dbReference type="PRINTS" id="PR00156">
    <property type="entry name" value="COPPERBLUE"/>
</dbReference>
<dbReference type="PRINTS" id="PR00157">
    <property type="entry name" value="PLASTOCYANIN"/>
</dbReference>
<dbReference type="SUPFAM" id="SSF49503">
    <property type="entry name" value="Cupredoxins"/>
    <property type="match status" value="1"/>
</dbReference>
<dbReference type="PROSITE" id="PS00196">
    <property type="entry name" value="COPPER_BLUE"/>
    <property type="match status" value="1"/>
</dbReference>
<organism>
    <name type="scientific">Cucurbita pepo</name>
    <name type="common">Vegetable marrow</name>
    <name type="synonym">Summer squash</name>
    <dbReference type="NCBI Taxonomy" id="3663"/>
    <lineage>
        <taxon>Eukaryota</taxon>
        <taxon>Viridiplantae</taxon>
        <taxon>Streptophyta</taxon>
        <taxon>Embryophyta</taxon>
        <taxon>Tracheophyta</taxon>
        <taxon>Spermatophyta</taxon>
        <taxon>Magnoliopsida</taxon>
        <taxon>eudicotyledons</taxon>
        <taxon>Gunneridae</taxon>
        <taxon>Pentapetalae</taxon>
        <taxon>rosids</taxon>
        <taxon>fabids</taxon>
        <taxon>Cucurbitales</taxon>
        <taxon>Cucurbitaceae</taxon>
        <taxon>Cucurbiteae</taxon>
        <taxon>Cucurbita</taxon>
    </lineage>
</organism>